<proteinExistence type="inferred from homology"/>
<organism>
    <name type="scientific">Vibrio cholerae serotype O1 (strain ATCC 39541 / Classical Ogawa 395 / O395)</name>
    <dbReference type="NCBI Taxonomy" id="345073"/>
    <lineage>
        <taxon>Bacteria</taxon>
        <taxon>Pseudomonadati</taxon>
        <taxon>Pseudomonadota</taxon>
        <taxon>Gammaproteobacteria</taxon>
        <taxon>Vibrionales</taxon>
        <taxon>Vibrionaceae</taxon>
        <taxon>Vibrio</taxon>
    </lineage>
</organism>
<name>LUXS_VIBC3</name>
<comment type="function">
    <text evidence="1">Involved in the synthesis of autoinducer 2 (AI-2) which is secreted by bacteria and is used to communicate both the cell density and the metabolic potential of the environment. The regulation of gene expression in response to changes in cell density is called quorum sensing. Catalyzes the transformation of S-ribosylhomocysteine (RHC) to homocysteine (HC) and 4,5-dihydroxy-2,3-pentadione (DPD).</text>
</comment>
<comment type="catalytic activity">
    <reaction evidence="1">
        <text>S-(5-deoxy-D-ribos-5-yl)-L-homocysteine = (S)-4,5-dihydroxypentane-2,3-dione + L-homocysteine</text>
        <dbReference type="Rhea" id="RHEA:17753"/>
        <dbReference type="ChEBI" id="CHEBI:29484"/>
        <dbReference type="ChEBI" id="CHEBI:58195"/>
        <dbReference type="ChEBI" id="CHEBI:58199"/>
        <dbReference type="EC" id="4.4.1.21"/>
    </reaction>
</comment>
<comment type="cofactor">
    <cofactor evidence="1">
        <name>Fe cation</name>
        <dbReference type="ChEBI" id="CHEBI:24875"/>
    </cofactor>
    <text evidence="1">Binds 1 Fe cation per subunit.</text>
</comment>
<comment type="subunit">
    <text evidence="1">Homodimer.</text>
</comment>
<comment type="similarity">
    <text evidence="1">Belongs to the LuxS family.</text>
</comment>
<feature type="chain" id="PRO_1000071261" description="S-ribosylhomocysteine lyase">
    <location>
        <begin position="1"/>
        <end position="172"/>
    </location>
</feature>
<feature type="binding site" evidence="1">
    <location>
        <position position="54"/>
    </location>
    <ligand>
        <name>Fe cation</name>
        <dbReference type="ChEBI" id="CHEBI:24875"/>
    </ligand>
</feature>
<feature type="binding site" evidence="1">
    <location>
        <position position="58"/>
    </location>
    <ligand>
        <name>Fe cation</name>
        <dbReference type="ChEBI" id="CHEBI:24875"/>
    </ligand>
</feature>
<feature type="binding site" evidence="1">
    <location>
        <position position="128"/>
    </location>
    <ligand>
        <name>Fe cation</name>
        <dbReference type="ChEBI" id="CHEBI:24875"/>
    </ligand>
</feature>
<protein>
    <recommendedName>
        <fullName evidence="1">S-ribosylhomocysteine lyase</fullName>
        <ecNumber evidence="1">4.4.1.21</ecNumber>
    </recommendedName>
    <alternativeName>
        <fullName evidence="1">AI-2 synthesis protein</fullName>
    </alternativeName>
    <alternativeName>
        <fullName evidence="1">Autoinducer-2 production protein LuxS</fullName>
    </alternativeName>
</protein>
<reference key="1">
    <citation type="submission" date="2007-03" db="EMBL/GenBank/DDBJ databases">
        <authorList>
            <person name="Heidelberg J."/>
        </authorList>
    </citation>
    <scope>NUCLEOTIDE SEQUENCE [LARGE SCALE GENOMIC DNA]</scope>
    <source>
        <strain>ATCC 39541 / Classical Ogawa 395 / O395</strain>
    </source>
</reference>
<reference key="2">
    <citation type="journal article" date="2008" name="PLoS ONE">
        <title>A recalibrated molecular clock and independent origins for the cholera pandemic clones.</title>
        <authorList>
            <person name="Feng L."/>
            <person name="Reeves P.R."/>
            <person name="Lan R."/>
            <person name="Ren Y."/>
            <person name="Gao C."/>
            <person name="Zhou Z."/>
            <person name="Ren Y."/>
            <person name="Cheng J."/>
            <person name="Wang W."/>
            <person name="Wang J."/>
            <person name="Qian W."/>
            <person name="Li D."/>
            <person name="Wang L."/>
        </authorList>
    </citation>
    <scope>NUCLEOTIDE SEQUENCE [LARGE SCALE GENOMIC DNA]</scope>
    <source>
        <strain>ATCC 39541 / Classical Ogawa 395 / O395</strain>
    </source>
</reference>
<sequence>MPLLDSFTVDHTRMNAPAVRVAKTMQTPKGDTITVFDLRFTMPNKDILSERGIHTLEHLYAGFMRNHLNGSQVEIIDISPMGCRTGFYMSLIGAPTEQQVAQAWLAAMQDVLKVESQEQIPELNEYQCGTAAMHSLEEAKAIAKNVIAAGISVNRNDELALPESMLNELKVH</sequence>
<dbReference type="EC" id="4.4.1.21" evidence="1"/>
<dbReference type="EMBL" id="CP000627">
    <property type="protein sequence ID" value="ABQ20738.1"/>
    <property type="molecule type" value="Genomic_DNA"/>
</dbReference>
<dbReference type="EMBL" id="CP001235">
    <property type="protein sequence ID" value="ACP08593.1"/>
    <property type="molecule type" value="Genomic_DNA"/>
</dbReference>
<dbReference type="RefSeq" id="WP_001130227.1">
    <property type="nucleotide sequence ID" value="NZ_JAACZH010000006.1"/>
</dbReference>
<dbReference type="SMR" id="A5F9A3"/>
<dbReference type="GeneID" id="69720681"/>
<dbReference type="KEGG" id="vco:VC0395_A0091"/>
<dbReference type="KEGG" id="vcr:VC395_0574"/>
<dbReference type="PATRIC" id="fig|345073.21.peg.562"/>
<dbReference type="eggNOG" id="COG1854">
    <property type="taxonomic scope" value="Bacteria"/>
</dbReference>
<dbReference type="HOGENOM" id="CLU_107531_2_0_6"/>
<dbReference type="OrthoDB" id="9788129at2"/>
<dbReference type="Proteomes" id="UP000000249">
    <property type="component" value="Chromosome 2"/>
</dbReference>
<dbReference type="GO" id="GO:0005506">
    <property type="term" value="F:iron ion binding"/>
    <property type="evidence" value="ECO:0007669"/>
    <property type="project" value="InterPro"/>
</dbReference>
<dbReference type="GO" id="GO:0043768">
    <property type="term" value="F:S-ribosylhomocysteine lyase activity"/>
    <property type="evidence" value="ECO:0007669"/>
    <property type="project" value="UniProtKB-UniRule"/>
</dbReference>
<dbReference type="GO" id="GO:0009372">
    <property type="term" value="P:quorum sensing"/>
    <property type="evidence" value="ECO:0007669"/>
    <property type="project" value="UniProtKB-UniRule"/>
</dbReference>
<dbReference type="FunFam" id="3.30.1360.80:FF:000001">
    <property type="entry name" value="S-ribosylhomocysteine lyase"/>
    <property type="match status" value="1"/>
</dbReference>
<dbReference type="Gene3D" id="3.30.1360.80">
    <property type="entry name" value="S-ribosylhomocysteinase (LuxS)"/>
    <property type="match status" value="1"/>
</dbReference>
<dbReference type="HAMAP" id="MF_00091">
    <property type="entry name" value="LuxS"/>
    <property type="match status" value="1"/>
</dbReference>
<dbReference type="InterPro" id="IPR037005">
    <property type="entry name" value="LuxS_sf"/>
</dbReference>
<dbReference type="InterPro" id="IPR011249">
    <property type="entry name" value="Metalloenz_LuxS/M16"/>
</dbReference>
<dbReference type="InterPro" id="IPR003815">
    <property type="entry name" value="S-ribosylhomocysteinase"/>
</dbReference>
<dbReference type="NCBIfam" id="NF002602">
    <property type="entry name" value="PRK02260.1-2"/>
    <property type="match status" value="1"/>
</dbReference>
<dbReference type="PANTHER" id="PTHR35799">
    <property type="entry name" value="S-RIBOSYLHOMOCYSTEINE LYASE"/>
    <property type="match status" value="1"/>
</dbReference>
<dbReference type="PANTHER" id="PTHR35799:SF1">
    <property type="entry name" value="S-RIBOSYLHOMOCYSTEINE LYASE"/>
    <property type="match status" value="1"/>
</dbReference>
<dbReference type="Pfam" id="PF02664">
    <property type="entry name" value="LuxS"/>
    <property type="match status" value="1"/>
</dbReference>
<dbReference type="PIRSF" id="PIRSF006160">
    <property type="entry name" value="AI2"/>
    <property type="match status" value="1"/>
</dbReference>
<dbReference type="PRINTS" id="PR01487">
    <property type="entry name" value="LUXSPROTEIN"/>
</dbReference>
<dbReference type="SUPFAM" id="SSF63411">
    <property type="entry name" value="LuxS/MPP-like metallohydrolase"/>
    <property type="match status" value="1"/>
</dbReference>
<accession>A5F9A3</accession>
<accession>C3LX83</accession>
<evidence type="ECO:0000255" key="1">
    <source>
        <dbReference type="HAMAP-Rule" id="MF_00091"/>
    </source>
</evidence>
<gene>
    <name evidence="1" type="primary">luxS</name>
    <name type="ordered locus">VC0395_A0091</name>
    <name type="ordered locus">VC395_0574</name>
</gene>
<keyword id="KW-0071">Autoinducer synthesis</keyword>
<keyword id="KW-0408">Iron</keyword>
<keyword id="KW-0456">Lyase</keyword>
<keyword id="KW-0479">Metal-binding</keyword>
<keyword id="KW-0673">Quorum sensing</keyword>